<dbReference type="EC" id="4.2.1.33" evidence="1"/>
<dbReference type="EMBL" id="CP000266">
    <property type="protein sequence ID" value="ABF02350.1"/>
    <property type="molecule type" value="Genomic_DNA"/>
</dbReference>
<dbReference type="RefSeq" id="WP_001140650.1">
    <property type="nucleotide sequence ID" value="NC_008258.1"/>
</dbReference>
<dbReference type="SMR" id="Q0T8C6"/>
<dbReference type="KEGG" id="sfv:SFV_0064"/>
<dbReference type="HOGENOM" id="CLU_006714_3_4_6"/>
<dbReference type="UniPathway" id="UPA00048">
    <property type="reaction ID" value="UER00071"/>
</dbReference>
<dbReference type="Proteomes" id="UP000000659">
    <property type="component" value="Chromosome"/>
</dbReference>
<dbReference type="GO" id="GO:0003861">
    <property type="term" value="F:3-isopropylmalate dehydratase activity"/>
    <property type="evidence" value="ECO:0007669"/>
    <property type="project" value="UniProtKB-UniRule"/>
</dbReference>
<dbReference type="GO" id="GO:0051539">
    <property type="term" value="F:4 iron, 4 sulfur cluster binding"/>
    <property type="evidence" value="ECO:0007669"/>
    <property type="project" value="UniProtKB-KW"/>
</dbReference>
<dbReference type="GO" id="GO:0046872">
    <property type="term" value="F:metal ion binding"/>
    <property type="evidence" value="ECO:0007669"/>
    <property type="project" value="UniProtKB-KW"/>
</dbReference>
<dbReference type="GO" id="GO:0009098">
    <property type="term" value="P:L-leucine biosynthetic process"/>
    <property type="evidence" value="ECO:0007669"/>
    <property type="project" value="UniProtKB-UniRule"/>
</dbReference>
<dbReference type="CDD" id="cd01583">
    <property type="entry name" value="IPMI"/>
    <property type="match status" value="1"/>
</dbReference>
<dbReference type="FunFam" id="3.30.499.10:FF:000006">
    <property type="entry name" value="3-isopropylmalate dehydratase large subunit"/>
    <property type="match status" value="1"/>
</dbReference>
<dbReference type="FunFam" id="3.30.499.10:FF:000007">
    <property type="entry name" value="3-isopropylmalate dehydratase large subunit"/>
    <property type="match status" value="1"/>
</dbReference>
<dbReference type="Gene3D" id="3.30.499.10">
    <property type="entry name" value="Aconitase, domain 3"/>
    <property type="match status" value="2"/>
</dbReference>
<dbReference type="HAMAP" id="MF_01026">
    <property type="entry name" value="LeuC_type1"/>
    <property type="match status" value="1"/>
</dbReference>
<dbReference type="InterPro" id="IPR004430">
    <property type="entry name" value="3-IsopropMal_deHydase_lsu"/>
</dbReference>
<dbReference type="InterPro" id="IPR015931">
    <property type="entry name" value="Acnase/IPM_dHydase_lsu_aba_1/3"/>
</dbReference>
<dbReference type="InterPro" id="IPR001030">
    <property type="entry name" value="Acoase/IPM_deHydtase_lsu_aba"/>
</dbReference>
<dbReference type="InterPro" id="IPR018136">
    <property type="entry name" value="Aconitase_4Fe-4S_BS"/>
</dbReference>
<dbReference type="InterPro" id="IPR036008">
    <property type="entry name" value="Aconitase_4Fe-4S_dom"/>
</dbReference>
<dbReference type="InterPro" id="IPR050067">
    <property type="entry name" value="IPM_dehydratase_rel_enz"/>
</dbReference>
<dbReference type="InterPro" id="IPR033941">
    <property type="entry name" value="IPMI_cat"/>
</dbReference>
<dbReference type="NCBIfam" id="TIGR00170">
    <property type="entry name" value="leuC"/>
    <property type="match status" value="1"/>
</dbReference>
<dbReference type="NCBIfam" id="NF004016">
    <property type="entry name" value="PRK05478.1"/>
    <property type="match status" value="1"/>
</dbReference>
<dbReference type="NCBIfam" id="NF009116">
    <property type="entry name" value="PRK12466.1"/>
    <property type="match status" value="1"/>
</dbReference>
<dbReference type="PANTHER" id="PTHR43822:SF9">
    <property type="entry name" value="3-ISOPROPYLMALATE DEHYDRATASE"/>
    <property type="match status" value="1"/>
</dbReference>
<dbReference type="PANTHER" id="PTHR43822">
    <property type="entry name" value="HOMOACONITASE, MITOCHONDRIAL-RELATED"/>
    <property type="match status" value="1"/>
</dbReference>
<dbReference type="Pfam" id="PF00330">
    <property type="entry name" value="Aconitase"/>
    <property type="match status" value="1"/>
</dbReference>
<dbReference type="PRINTS" id="PR00415">
    <property type="entry name" value="ACONITASE"/>
</dbReference>
<dbReference type="SUPFAM" id="SSF53732">
    <property type="entry name" value="Aconitase iron-sulfur domain"/>
    <property type="match status" value="1"/>
</dbReference>
<dbReference type="PROSITE" id="PS00450">
    <property type="entry name" value="ACONITASE_1"/>
    <property type="match status" value="1"/>
</dbReference>
<dbReference type="PROSITE" id="PS01244">
    <property type="entry name" value="ACONITASE_2"/>
    <property type="match status" value="1"/>
</dbReference>
<sequence length="466" mass="49894">MAKTLYEKLFDAHVVYEAENETPLLYIDRHLVHEVTSPQAFDGLRAHGRPVRQPGKTFATMDHNVSTQTKDINACGEMARIQMQELIKNCKEFGVELYDLNHPYQGIVHVMGPEQGVTLPGMTIVCGDSHTATHGAFGALAFGIGTSEVEHVLATQTLKQGRAKTMKIEVQGKAAPGITAKDIVLAIIGKTGSAGGTGHVVEFCGEAIRDLSMEGRMTLCNMAIEMGAKAGLVAPDETTFNYVKGRLHAPKGKDFDDAVAYWKTLQTDEGATFDTVVTLQAEEISPQVTWGTNPGQVISVNDNIPDPASFADPVERASAEKALAYMGLKPGIPLIEVAIDKVFIGSCTNSRIEDLRAAAEIAKGRKVAPGVQALVVPGSGPVKAQAEAEGLDKIFIEAGFEWRLPGCSMCLAMNNDRLNPGERCASTSNRNFEGRQGRGGRTHLVSPAMAAAAAVTGHFADIRNIK</sequence>
<feature type="chain" id="PRO_1000063611" description="3-isopropylmalate dehydratase large subunit">
    <location>
        <begin position="1"/>
        <end position="466"/>
    </location>
</feature>
<feature type="binding site" evidence="1">
    <location>
        <position position="347"/>
    </location>
    <ligand>
        <name>[4Fe-4S] cluster</name>
        <dbReference type="ChEBI" id="CHEBI:49883"/>
    </ligand>
</feature>
<feature type="binding site" evidence="1">
    <location>
        <position position="407"/>
    </location>
    <ligand>
        <name>[4Fe-4S] cluster</name>
        <dbReference type="ChEBI" id="CHEBI:49883"/>
    </ligand>
</feature>
<feature type="binding site" evidence="1">
    <location>
        <position position="410"/>
    </location>
    <ligand>
        <name>[4Fe-4S] cluster</name>
        <dbReference type="ChEBI" id="CHEBI:49883"/>
    </ligand>
</feature>
<gene>
    <name evidence="1" type="primary">leuC</name>
    <name type="ordered locus">SFV_0064</name>
</gene>
<reference key="1">
    <citation type="journal article" date="2006" name="BMC Genomics">
        <title>Complete genome sequence of Shigella flexneri 5b and comparison with Shigella flexneri 2a.</title>
        <authorList>
            <person name="Nie H."/>
            <person name="Yang F."/>
            <person name="Zhang X."/>
            <person name="Yang J."/>
            <person name="Chen L."/>
            <person name="Wang J."/>
            <person name="Xiong Z."/>
            <person name="Peng J."/>
            <person name="Sun L."/>
            <person name="Dong J."/>
            <person name="Xue Y."/>
            <person name="Xu X."/>
            <person name="Chen S."/>
            <person name="Yao Z."/>
            <person name="Shen Y."/>
            <person name="Jin Q."/>
        </authorList>
    </citation>
    <scope>NUCLEOTIDE SEQUENCE [LARGE SCALE GENOMIC DNA]</scope>
    <source>
        <strain>8401</strain>
    </source>
</reference>
<protein>
    <recommendedName>
        <fullName evidence="1">3-isopropylmalate dehydratase large subunit</fullName>
        <ecNumber evidence="1">4.2.1.33</ecNumber>
    </recommendedName>
    <alternativeName>
        <fullName evidence="1">Alpha-IPM isomerase</fullName>
        <shortName evidence="1">IPMI</shortName>
    </alternativeName>
    <alternativeName>
        <fullName evidence="1">Isopropylmalate isomerase</fullName>
    </alternativeName>
</protein>
<evidence type="ECO:0000255" key="1">
    <source>
        <dbReference type="HAMAP-Rule" id="MF_01026"/>
    </source>
</evidence>
<name>LEUC_SHIF8</name>
<proteinExistence type="inferred from homology"/>
<accession>Q0T8C6</accession>
<comment type="function">
    <text evidence="1">Catalyzes the isomerization between 2-isopropylmalate and 3-isopropylmalate, via the formation of 2-isopropylmaleate.</text>
</comment>
<comment type="catalytic activity">
    <reaction evidence="1">
        <text>(2R,3S)-3-isopropylmalate = (2S)-2-isopropylmalate</text>
        <dbReference type="Rhea" id="RHEA:32287"/>
        <dbReference type="ChEBI" id="CHEBI:1178"/>
        <dbReference type="ChEBI" id="CHEBI:35121"/>
        <dbReference type="EC" id="4.2.1.33"/>
    </reaction>
</comment>
<comment type="cofactor">
    <cofactor evidence="1">
        <name>[4Fe-4S] cluster</name>
        <dbReference type="ChEBI" id="CHEBI:49883"/>
    </cofactor>
    <text evidence="1">Binds 1 [4Fe-4S] cluster per subunit.</text>
</comment>
<comment type="pathway">
    <text evidence="1">Amino-acid biosynthesis; L-leucine biosynthesis; L-leucine from 3-methyl-2-oxobutanoate: step 2/4.</text>
</comment>
<comment type="subunit">
    <text evidence="1">Heterodimer of LeuC and LeuD.</text>
</comment>
<comment type="similarity">
    <text evidence="1">Belongs to the aconitase/IPM isomerase family. LeuC type 1 subfamily.</text>
</comment>
<keyword id="KW-0004">4Fe-4S</keyword>
<keyword id="KW-0028">Amino-acid biosynthesis</keyword>
<keyword id="KW-0100">Branched-chain amino acid biosynthesis</keyword>
<keyword id="KW-0408">Iron</keyword>
<keyword id="KW-0411">Iron-sulfur</keyword>
<keyword id="KW-0432">Leucine biosynthesis</keyword>
<keyword id="KW-0456">Lyase</keyword>
<keyword id="KW-0479">Metal-binding</keyword>
<organism>
    <name type="scientific">Shigella flexneri serotype 5b (strain 8401)</name>
    <dbReference type="NCBI Taxonomy" id="373384"/>
    <lineage>
        <taxon>Bacteria</taxon>
        <taxon>Pseudomonadati</taxon>
        <taxon>Pseudomonadota</taxon>
        <taxon>Gammaproteobacteria</taxon>
        <taxon>Enterobacterales</taxon>
        <taxon>Enterobacteriaceae</taxon>
        <taxon>Shigella</taxon>
    </lineage>
</organism>